<sequence>MTLAVKVPLKEGEIVRRRLIELGALDNTYKIKREGNFLLIPVKFPVKGFEVVEAELEQVSRRPNSYREIVNVPQELRRFLPTSFDIIGNIAIIEIPEELKGYAKEIGRAIVEVHKNVKAVYMKGSKIEGEYRTRELIHIAGENITETIHRENGIRLKLDVAKVYFSPRLATERMRVFKMAQEGEVVFDMFAGVGPFSILLAKKAELVFACDINPWAIKYLEENIKLNKVNNVVPILGDSREIEVKADRIIMNLPKYAHEFLEHAISCINDGGVIHYYGFGPEGDPYGWHLERIRELANKFGVKVEVLGKRVIRNYAPRQYNIAIDFRVSF</sequence>
<protein>
    <recommendedName>
        <fullName>tRNA (guanine(37)-N(1))-methyltransferase Trm5b</fullName>
        <ecNumber evidence="2">2.1.1.228</ecNumber>
    </recommendedName>
    <alternativeName>
        <fullName>M1G-methyltransferase</fullName>
    </alternativeName>
    <alternativeName>
        <fullName>tRNA [GM37] methyltransferase</fullName>
    </alternativeName>
</protein>
<gene>
    <name evidence="3" type="primary">trm5b</name>
    <name type="ordered locus">PYRAB07390</name>
    <name type="ORF">PAB0505</name>
</gene>
<organism>
    <name type="scientific">Pyrococcus abyssi (strain GE5 / Orsay)</name>
    <dbReference type="NCBI Taxonomy" id="272844"/>
    <lineage>
        <taxon>Archaea</taxon>
        <taxon>Methanobacteriati</taxon>
        <taxon>Methanobacteriota</taxon>
        <taxon>Thermococci</taxon>
        <taxon>Thermococcales</taxon>
        <taxon>Thermococcaceae</taxon>
        <taxon>Pyrococcus</taxon>
    </lineage>
</organism>
<proteinExistence type="evidence at protein level"/>
<accession>Q9V0Q0</accession>
<accession>G8ZGU0</accession>
<reference key="1">
    <citation type="journal article" date="2003" name="Mol. Microbiol.">
        <title>An integrated analysis of the genome of the hyperthermophilic archaeon Pyrococcus abyssi.</title>
        <authorList>
            <person name="Cohen G.N."/>
            <person name="Barbe V."/>
            <person name="Flament D."/>
            <person name="Galperin M."/>
            <person name="Heilig R."/>
            <person name="Lecompte O."/>
            <person name="Poch O."/>
            <person name="Prieur D."/>
            <person name="Querellou J."/>
            <person name="Ripp R."/>
            <person name="Thierry J.-C."/>
            <person name="Van der Oost J."/>
            <person name="Weissenbach J."/>
            <person name="Zivanovic Y."/>
            <person name="Forterre P."/>
        </authorList>
    </citation>
    <scope>NUCLEOTIDE SEQUENCE [LARGE SCALE GENOMIC DNA]</scope>
    <source>
        <strain>GE5 / Orsay</strain>
    </source>
</reference>
<reference key="2">
    <citation type="journal article" date="2012" name="Curr. Microbiol.">
        <title>Re-annotation of two hyperthermophilic archaea Pyrococcus abyssi GE5 and Pyrococcus furiosus DSM 3638.</title>
        <authorList>
            <person name="Gao J."/>
            <person name="Wang J."/>
        </authorList>
    </citation>
    <scope>GENOME REANNOTATION</scope>
    <source>
        <strain>GE5 / Orsay</strain>
    </source>
</reference>
<reference key="3">
    <citation type="journal article" date="2010" name="Mol. Biol. Evol.">
        <title>Biosynthesis of wyosine derivatives in tRNA: an ancient and highly diverse pathway in Archaea.</title>
        <authorList>
            <person name="de Crecy-Lagard V."/>
            <person name="Brochier-Armanet C."/>
            <person name="Urbonavicius J."/>
            <person name="Fernandez B."/>
            <person name="Phillips G."/>
            <person name="Lyons B."/>
            <person name="Noma A."/>
            <person name="Alvarez S."/>
            <person name="Droogmans L."/>
            <person name="Armengaud J."/>
            <person name="Grosjean H."/>
        </authorList>
    </citation>
    <scope>FUNCTION</scope>
    <scope>CATALYTIC ACTIVITY</scope>
    <scope>GENE NAME</scope>
</reference>
<dbReference type="EC" id="2.1.1.228" evidence="2"/>
<dbReference type="EMBL" id="AJ248285">
    <property type="protein sequence ID" value="CAB49653.1"/>
    <property type="molecule type" value="Genomic_DNA"/>
</dbReference>
<dbReference type="EMBL" id="HE613800">
    <property type="protein sequence ID" value="CCE70135.1"/>
    <property type="status" value="ALT_INIT"/>
    <property type="molecule type" value="Genomic_DNA"/>
</dbReference>
<dbReference type="PIR" id="D75117">
    <property type="entry name" value="D75117"/>
</dbReference>
<dbReference type="RefSeq" id="WP_010867861.1">
    <property type="nucleotide sequence ID" value="NC_000868.1"/>
</dbReference>
<dbReference type="PDB" id="5YAC">
    <property type="method" value="X-ray"/>
    <property type="resolution" value="3.30 A"/>
    <property type="chains" value="A=1-330"/>
</dbReference>
<dbReference type="PDBsum" id="5YAC"/>
<dbReference type="SMR" id="Q9V0Q0"/>
<dbReference type="STRING" id="272844.PAB0505"/>
<dbReference type="KEGG" id="pab:PAB0505"/>
<dbReference type="PATRIC" id="fig|272844.11.peg.779"/>
<dbReference type="eggNOG" id="arCOG00033">
    <property type="taxonomic scope" value="Archaea"/>
</dbReference>
<dbReference type="HOGENOM" id="CLU_022610_0_1_2"/>
<dbReference type="OrthoDB" id="8079at2157"/>
<dbReference type="PhylomeDB" id="Q9V0Q0"/>
<dbReference type="BioCyc" id="MetaCyc:MONOMER-18046"/>
<dbReference type="BRENDA" id="2.1.1.228">
    <property type="organism ID" value="5242"/>
</dbReference>
<dbReference type="Proteomes" id="UP000000810">
    <property type="component" value="Chromosome"/>
</dbReference>
<dbReference type="Proteomes" id="UP000009139">
    <property type="component" value="Chromosome"/>
</dbReference>
<dbReference type="GO" id="GO:0005737">
    <property type="term" value="C:cytoplasm"/>
    <property type="evidence" value="ECO:0007669"/>
    <property type="project" value="UniProtKB-SubCell"/>
</dbReference>
<dbReference type="GO" id="GO:0052906">
    <property type="term" value="F:tRNA (guanine(37)-N1)-methyltransferase activity"/>
    <property type="evidence" value="ECO:0000314"/>
    <property type="project" value="UniProtKB"/>
</dbReference>
<dbReference type="GO" id="GO:0030488">
    <property type="term" value="P:tRNA methylation"/>
    <property type="evidence" value="ECO:0000314"/>
    <property type="project" value="UniProtKB"/>
</dbReference>
<dbReference type="GO" id="GO:0002939">
    <property type="term" value="P:tRNA N1-guanine methylation"/>
    <property type="evidence" value="ECO:0007669"/>
    <property type="project" value="TreeGrafter"/>
</dbReference>
<dbReference type="CDD" id="cd02440">
    <property type="entry name" value="AdoMet_MTases"/>
    <property type="match status" value="1"/>
</dbReference>
<dbReference type="FunFam" id="3.30.300.110:FF:000001">
    <property type="entry name" value="tRNA (guanine(37)-N1)-methyltransferase"/>
    <property type="match status" value="1"/>
</dbReference>
<dbReference type="FunFam" id="3.40.50.150:FF:000131">
    <property type="entry name" value="tRNA wybutosine-synthesizing protein 2/3/4"/>
    <property type="match status" value="1"/>
</dbReference>
<dbReference type="Gene3D" id="3.30.70.2580">
    <property type="match status" value="1"/>
</dbReference>
<dbReference type="Gene3D" id="3.30.300.110">
    <property type="entry name" value="Met-10+ protein-like domains"/>
    <property type="match status" value="1"/>
</dbReference>
<dbReference type="Gene3D" id="3.40.50.150">
    <property type="entry name" value="Vaccinia Virus protein VP39"/>
    <property type="match status" value="1"/>
</dbReference>
<dbReference type="InterPro" id="IPR030382">
    <property type="entry name" value="MeTrfase_TRM5/TYW2"/>
</dbReference>
<dbReference type="InterPro" id="IPR029063">
    <property type="entry name" value="SAM-dependent_MTases_sf"/>
</dbReference>
<dbReference type="InterPro" id="IPR056743">
    <property type="entry name" value="TRM5-TYW2-like_MTfase"/>
</dbReference>
<dbReference type="InterPro" id="IPR056744">
    <property type="entry name" value="TRM5/TYW2-like_N"/>
</dbReference>
<dbReference type="InterPro" id="IPR040601">
    <property type="entry name" value="Trm5a/b_N"/>
</dbReference>
<dbReference type="NCBIfam" id="NF047730">
    <property type="entry name" value="tRNAMtaseTrm5b"/>
    <property type="match status" value="1"/>
</dbReference>
<dbReference type="PANTHER" id="PTHR23245:SF36">
    <property type="entry name" value="TRNA (GUANINE(37)-N1)-METHYLTRANSFERASE"/>
    <property type="match status" value="1"/>
</dbReference>
<dbReference type="PANTHER" id="PTHR23245">
    <property type="entry name" value="TRNA METHYLTRANSFERASE"/>
    <property type="match status" value="1"/>
</dbReference>
<dbReference type="Pfam" id="PF02475">
    <property type="entry name" value="TRM5-TYW2_MTfase"/>
    <property type="match status" value="1"/>
</dbReference>
<dbReference type="Pfam" id="PF18093">
    <property type="entry name" value="Trm5_N"/>
    <property type="match status" value="1"/>
</dbReference>
<dbReference type="Pfam" id="PF25133">
    <property type="entry name" value="TYW2_N_2"/>
    <property type="match status" value="1"/>
</dbReference>
<dbReference type="SUPFAM" id="SSF53335">
    <property type="entry name" value="S-adenosyl-L-methionine-dependent methyltransferases"/>
    <property type="match status" value="1"/>
</dbReference>
<dbReference type="PROSITE" id="PS51684">
    <property type="entry name" value="SAM_MT_TRM5_TYW2"/>
    <property type="match status" value="1"/>
</dbReference>
<evidence type="ECO:0000255" key="1">
    <source>
        <dbReference type="PROSITE-ProRule" id="PRU01021"/>
    </source>
</evidence>
<evidence type="ECO:0000269" key="2">
    <source>
    </source>
</evidence>
<evidence type="ECO:0000303" key="3">
    <source>
    </source>
</evidence>
<evidence type="ECO:0000305" key="4"/>
<evidence type="ECO:0007829" key="5">
    <source>
        <dbReference type="PDB" id="5YAC"/>
    </source>
</evidence>
<feature type="chain" id="PRO_0000407848" description="tRNA (guanine(37)-N(1))-methyltransferase Trm5b">
    <location>
        <begin position="1"/>
        <end position="330"/>
    </location>
</feature>
<feature type="binding site" evidence="1">
    <location>
        <position position="173"/>
    </location>
    <ligand>
        <name>S-adenosyl-L-methionine</name>
        <dbReference type="ChEBI" id="CHEBI:59789"/>
    </ligand>
</feature>
<feature type="binding site" evidence="1">
    <location>
        <begin position="211"/>
        <end position="212"/>
    </location>
    <ligand>
        <name>S-adenosyl-L-methionine</name>
        <dbReference type="ChEBI" id="CHEBI:59789"/>
    </ligand>
</feature>
<feature type="binding site" evidence="1">
    <location>
        <begin position="238"/>
        <end position="239"/>
    </location>
    <ligand>
        <name>S-adenosyl-L-methionine</name>
        <dbReference type="ChEBI" id="CHEBI:59789"/>
    </ligand>
</feature>
<feature type="binding site" evidence="1">
    <location>
        <position position="252"/>
    </location>
    <ligand>
        <name>S-adenosyl-L-methionine</name>
        <dbReference type="ChEBI" id="CHEBI:59789"/>
    </ligand>
</feature>
<feature type="strand" evidence="5">
    <location>
        <begin position="2"/>
        <end position="8"/>
    </location>
</feature>
<feature type="helix" evidence="5">
    <location>
        <begin position="9"/>
        <end position="11"/>
    </location>
</feature>
<feature type="helix" evidence="5">
    <location>
        <begin position="12"/>
        <end position="22"/>
    </location>
</feature>
<feature type="strand" evidence="5">
    <location>
        <begin position="35"/>
        <end position="44"/>
    </location>
</feature>
<feature type="strand" evidence="5">
    <location>
        <begin position="51"/>
        <end position="54"/>
    </location>
</feature>
<feature type="helix" evidence="5">
    <location>
        <begin position="73"/>
        <end position="79"/>
    </location>
</feature>
<feature type="strand" evidence="5">
    <location>
        <begin position="85"/>
        <end position="87"/>
    </location>
</feature>
<feature type="strand" evidence="5">
    <location>
        <begin position="90"/>
        <end position="93"/>
    </location>
</feature>
<feature type="turn" evidence="5">
    <location>
        <begin position="97"/>
        <end position="99"/>
    </location>
</feature>
<feature type="helix" evidence="5">
    <location>
        <begin position="100"/>
        <end position="102"/>
    </location>
</feature>
<feature type="helix" evidence="5">
    <location>
        <begin position="103"/>
        <end position="113"/>
    </location>
</feature>
<feature type="strand" evidence="5">
    <location>
        <begin position="119"/>
        <end position="127"/>
    </location>
</feature>
<feature type="strand" evidence="5">
    <location>
        <begin position="129"/>
        <end position="141"/>
    </location>
</feature>
<feature type="strand" evidence="5">
    <location>
        <begin position="146"/>
        <end position="150"/>
    </location>
</feature>
<feature type="strand" evidence="5">
    <location>
        <begin position="155"/>
        <end position="159"/>
    </location>
</feature>
<feature type="turn" evidence="5">
    <location>
        <begin position="160"/>
        <end position="162"/>
    </location>
</feature>
<feature type="helix" evidence="5">
    <location>
        <begin position="167"/>
        <end position="169"/>
    </location>
</feature>
<feature type="helix" evidence="5">
    <location>
        <begin position="170"/>
        <end position="179"/>
    </location>
</feature>
<feature type="strand" evidence="5">
    <location>
        <begin position="184"/>
        <end position="190"/>
    </location>
</feature>
<feature type="helix" evidence="5">
    <location>
        <begin position="195"/>
        <end position="201"/>
    </location>
</feature>
<feature type="strand" evidence="5">
    <location>
        <begin position="204"/>
        <end position="212"/>
    </location>
</feature>
<feature type="helix" evidence="5">
    <location>
        <begin position="214"/>
        <end position="226"/>
    </location>
</feature>
<feature type="strand" evidence="5">
    <location>
        <begin position="231"/>
        <end position="237"/>
    </location>
</feature>
<feature type="helix" evidence="5">
    <location>
        <begin position="239"/>
        <end position="241"/>
    </location>
</feature>
<feature type="strand" evidence="5">
    <location>
        <begin position="246"/>
        <end position="251"/>
    </location>
</feature>
<feature type="turn" evidence="5">
    <location>
        <begin position="254"/>
        <end position="256"/>
    </location>
</feature>
<feature type="helix" evidence="5">
    <location>
        <begin position="257"/>
        <end position="266"/>
    </location>
</feature>
<feature type="strand" evidence="5">
    <location>
        <begin position="268"/>
        <end position="280"/>
    </location>
</feature>
<feature type="helix" evidence="5">
    <location>
        <begin position="287"/>
        <end position="300"/>
    </location>
</feature>
<feature type="strand" evidence="5">
    <location>
        <begin position="303"/>
        <end position="314"/>
    </location>
</feature>
<feature type="strand" evidence="5">
    <location>
        <begin position="316"/>
        <end position="318"/>
    </location>
</feature>
<feature type="strand" evidence="5">
    <location>
        <begin position="320"/>
        <end position="329"/>
    </location>
</feature>
<comment type="function">
    <text evidence="2">Specifically methylates the N1 position of guanosine-37 in various tRNAs.</text>
</comment>
<comment type="catalytic activity">
    <reaction evidence="2">
        <text>guanosine(37) in tRNA + S-adenosyl-L-methionine = N(1)-methylguanosine(37) in tRNA + S-adenosyl-L-homocysteine + H(+)</text>
        <dbReference type="Rhea" id="RHEA:36899"/>
        <dbReference type="Rhea" id="RHEA-COMP:10145"/>
        <dbReference type="Rhea" id="RHEA-COMP:10147"/>
        <dbReference type="ChEBI" id="CHEBI:15378"/>
        <dbReference type="ChEBI" id="CHEBI:57856"/>
        <dbReference type="ChEBI" id="CHEBI:59789"/>
        <dbReference type="ChEBI" id="CHEBI:73542"/>
        <dbReference type="ChEBI" id="CHEBI:74269"/>
        <dbReference type="EC" id="2.1.1.228"/>
    </reaction>
</comment>
<comment type="subcellular location">
    <subcellularLocation>
        <location evidence="4">Cytoplasm</location>
    </subcellularLocation>
</comment>
<comment type="similarity">
    <text evidence="1">Belongs to the class I-like SAM-binding methyltransferase superfamily. TRM5/TYW2 family.</text>
</comment>
<comment type="sequence caution" evidence="4">
    <conflict type="erroneous initiation">
        <sequence resource="EMBL-CDS" id="CCE70135"/>
    </conflict>
    <text>Extended N-terminus.</text>
</comment>
<keyword id="KW-0002">3D-structure</keyword>
<keyword id="KW-0963">Cytoplasm</keyword>
<keyword id="KW-0489">Methyltransferase</keyword>
<keyword id="KW-0949">S-adenosyl-L-methionine</keyword>
<keyword id="KW-0808">Transferase</keyword>
<keyword id="KW-0819">tRNA processing</keyword>
<name>TRM5B_PYRAB</name>